<gene>
    <name type="ordered locus">AF_0877</name>
</gene>
<protein>
    <recommendedName>
        <fullName>Uncharacterized protein AF_0877</fullName>
    </recommendedName>
</protein>
<proteinExistence type="predicted"/>
<feature type="chain" id="PRO_0000127939" description="Uncharacterized protein AF_0877">
    <location>
        <begin position="1"/>
        <end position="137"/>
    </location>
</feature>
<reference key="1">
    <citation type="journal article" date="1997" name="Nature">
        <title>The complete genome sequence of the hyperthermophilic, sulphate-reducing archaeon Archaeoglobus fulgidus.</title>
        <authorList>
            <person name="Klenk H.-P."/>
            <person name="Clayton R.A."/>
            <person name="Tomb J.-F."/>
            <person name="White O."/>
            <person name="Nelson K.E."/>
            <person name="Ketchum K.A."/>
            <person name="Dodson R.J."/>
            <person name="Gwinn M.L."/>
            <person name="Hickey E.K."/>
            <person name="Peterson J.D."/>
            <person name="Richardson D.L."/>
            <person name="Kerlavage A.R."/>
            <person name="Graham D.E."/>
            <person name="Kyrpides N.C."/>
            <person name="Fleischmann R.D."/>
            <person name="Quackenbush J."/>
            <person name="Lee N.H."/>
            <person name="Sutton G.G."/>
            <person name="Gill S.R."/>
            <person name="Kirkness E.F."/>
            <person name="Dougherty B.A."/>
            <person name="McKenney K."/>
            <person name="Adams M.D."/>
            <person name="Loftus B.J."/>
            <person name="Peterson S.N."/>
            <person name="Reich C.I."/>
            <person name="McNeil L.K."/>
            <person name="Badger J.H."/>
            <person name="Glodek A."/>
            <person name="Zhou L."/>
            <person name="Overbeek R."/>
            <person name="Gocayne J.D."/>
            <person name="Weidman J.F."/>
            <person name="McDonald L.A."/>
            <person name="Utterback T.R."/>
            <person name="Cotton M.D."/>
            <person name="Spriggs T."/>
            <person name="Artiach P."/>
            <person name="Kaine B.P."/>
            <person name="Sykes S.M."/>
            <person name="Sadow P.W."/>
            <person name="D'Andrea K.P."/>
            <person name="Bowman C."/>
            <person name="Fujii C."/>
            <person name="Garland S.A."/>
            <person name="Mason T.M."/>
            <person name="Olsen G.J."/>
            <person name="Fraser C.M."/>
            <person name="Smith H.O."/>
            <person name="Woese C.R."/>
            <person name="Venter J.C."/>
        </authorList>
    </citation>
    <scope>NUCLEOTIDE SEQUENCE [LARGE SCALE GENOMIC DNA]</scope>
    <source>
        <strain>ATCC 49558 / DSM 4304 / JCM 9628 / NBRC 100126 / VC-16</strain>
    </source>
</reference>
<accession>O29384</accession>
<sequence length="137" mass="15027">MVASYEIEFIGEGEVAGILREALRTDSRVESFEEFERGFKLRLVGAKRRITIVCKGSVQSDDCLLIVNARKMPENGGIALNADKIAERCGSKPEIAMLGAIAKLGVVDLKRLMSVIYREMGYGDVLAVKKGFEATNI</sequence>
<keyword id="KW-1185">Reference proteome</keyword>
<name>Y877_ARCFU</name>
<dbReference type="EMBL" id="AE000782">
    <property type="protein sequence ID" value="AAB90376.1"/>
    <property type="molecule type" value="Genomic_DNA"/>
</dbReference>
<dbReference type="PIR" id="E69359">
    <property type="entry name" value="E69359"/>
</dbReference>
<dbReference type="RefSeq" id="WP_010878378.1">
    <property type="nucleotide sequence ID" value="NC_000917.1"/>
</dbReference>
<dbReference type="PaxDb" id="224325-AF_0877"/>
<dbReference type="EnsemblBacteria" id="AAB90376">
    <property type="protein sequence ID" value="AAB90376"/>
    <property type="gene ID" value="AF_0877"/>
</dbReference>
<dbReference type="GeneID" id="1484098"/>
<dbReference type="KEGG" id="afu:AF_0877"/>
<dbReference type="HOGENOM" id="CLU_1860591_0_0_2"/>
<dbReference type="Proteomes" id="UP000002199">
    <property type="component" value="Chromosome"/>
</dbReference>
<organism>
    <name type="scientific">Archaeoglobus fulgidus (strain ATCC 49558 / DSM 4304 / JCM 9628 / NBRC 100126 / VC-16)</name>
    <dbReference type="NCBI Taxonomy" id="224325"/>
    <lineage>
        <taxon>Archaea</taxon>
        <taxon>Methanobacteriati</taxon>
        <taxon>Methanobacteriota</taxon>
        <taxon>Archaeoglobi</taxon>
        <taxon>Archaeoglobales</taxon>
        <taxon>Archaeoglobaceae</taxon>
        <taxon>Archaeoglobus</taxon>
    </lineage>
</organism>